<proteinExistence type="inferred from homology"/>
<protein>
    <recommendedName>
        <fullName evidence="1">Aspartate carbamoyltransferase catalytic subunit</fullName>
        <ecNumber evidence="1">2.1.3.2</ecNumber>
    </recommendedName>
    <alternativeName>
        <fullName evidence="1">Aspartate transcarbamylase</fullName>
        <shortName evidence="1">ATCase</shortName>
    </alternativeName>
</protein>
<organism>
    <name type="scientific">Vibrio cholerae serotype O1 (strain ATCC 39541 / Classical Ogawa 395 / O395)</name>
    <dbReference type="NCBI Taxonomy" id="345073"/>
    <lineage>
        <taxon>Bacteria</taxon>
        <taxon>Pseudomonadati</taxon>
        <taxon>Pseudomonadota</taxon>
        <taxon>Gammaproteobacteria</taxon>
        <taxon>Vibrionales</taxon>
        <taxon>Vibrionaceae</taxon>
        <taxon>Vibrio</taxon>
    </lineage>
</organism>
<dbReference type="EC" id="2.1.3.2" evidence="1"/>
<dbReference type="EMBL" id="CP000627">
    <property type="protein sequence ID" value="ABQ21919.1"/>
    <property type="status" value="ALT_INIT"/>
    <property type="molecule type" value="Genomic_DNA"/>
</dbReference>
<dbReference type="EMBL" id="CP001235">
    <property type="protein sequence ID" value="ACP10610.1"/>
    <property type="status" value="ALT_INIT"/>
    <property type="molecule type" value="Genomic_DNA"/>
</dbReference>
<dbReference type="RefSeq" id="WP_000013845.1">
    <property type="nucleotide sequence ID" value="NZ_JAACZH010000021.1"/>
</dbReference>
<dbReference type="SMR" id="A5F5C9"/>
<dbReference type="GeneID" id="88785074"/>
<dbReference type="KEGG" id="vco:VC0395_A2092"/>
<dbReference type="KEGG" id="vcr:VC395_2624"/>
<dbReference type="PATRIC" id="fig|345073.21.peg.2526"/>
<dbReference type="eggNOG" id="COG0540">
    <property type="taxonomic scope" value="Bacteria"/>
</dbReference>
<dbReference type="HOGENOM" id="CLU_043846_1_2_6"/>
<dbReference type="OrthoDB" id="9774690at2"/>
<dbReference type="UniPathway" id="UPA00070">
    <property type="reaction ID" value="UER00116"/>
</dbReference>
<dbReference type="Proteomes" id="UP000000249">
    <property type="component" value="Chromosome 2"/>
</dbReference>
<dbReference type="GO" id="GO:0005829">
    <property type="term" value="C:cytosol"/>
    <property type="evidence" value="ECO:0007669"/>
    <property type="project" value="TreeGrafter"/>
</dbReference>
<dbReference type="GO" id="GO:0016597">
    <property type="term" value="F:amino acid binding"/>
    <property type="evidence" value="ECO:0007669"/>
    <property type="project" value="InterPro"/>
</dbReference>
<dbReference type="GO" id="GO:0004070">
    <property type="term" value="F:aspartate carbamoyltransferase activity"/>
    <property type="evidence" value="ECO:0007669"/>
    <property type="project" value="UniProtKB-UniRule"/>
</dbReference>
<dbReference type="GO" id="GO:0006207">
    <property type="term" value="P:'de novo' pyrimidine nucleobase biosynthetic process"/>
    <property type="evidence" value="ECO:0007669"/>
    <property type="project" value="InterPro"/>
</dbReference>
<dbReference type="GO" id="GO:0044205">
    <property type="term" value="P:'de novo' UMP biosynthetic process"/>
    <property type="evidence" value="ECO:0007669"/>
    <property type="project" value="UniProtKB-UniRule"/>
</dbReference>
<dbReference type="GO" id="GO:0006520">
    <property type="term" value="P:amino acid metabolic process"/>
    <property type="evidence" value="ECO:0007669"/>
    <property type="project" value="InterPro"/>
</dbReference>
<dbReference type="FunFam" id="3.40.50.1370:FF:000001">
    <property type="entry name" value="Aspartate carbamoyltransferase"/>
    <property type="match status" value="1"/>
</dbReference>
<dbReference type="FunFam" id="3.40.50.1370:FF:000002">
    <property type="entry name" value="Aspartate carbamoyltransferase 2"/>
    <property type="match status" value="1"/>
</dbReference>
<dbReference type="Gene3D" id="3.40.50.1370">
    <property type="entry name" value="Aspartate/ornithine carbamoyltransferase"/>
    <property type="match status" value="2"/>
</dbReference>
<dbReference type="HAMAP" id="MF_00001">
    <property type="entry name" value="Asp_carb_tr"/>
    <property type="match status" value="1"/>
</dbReference>
<dbReference type="InterPro" id="IPR006132">
    <property type="entry name" value="Asp/Orn_carbamoyltranf_P-bd"/>
</dbReference>
<dbReference type="InterPro" id="IPR006130">
    <property type="entry name" value="Asp/Orn_carbamoylTrfase"/>
</dbReference>
<dbReference type="InterPro" id="IPR036901">
    <property type="entry name" value="Asp/Orn_carbamoylTrfase_sf"/>
</dbReference>
<dbReference type="InterPro" id="IPR002082">
    <property type="entry name" value="Asp_carbamoyltransf"/>
</dbReference>
<dbReference type="InterPro" id="IPR006131">
    <property type="entry name" value="Asp_carbamoyltransf_Asp/Orn-bd"/>
</dbReference>
<dbReference type="NCBIfam" id="TIGR00670">
    <property type="entry name" value="asp_carb_tr"/>
    <property type="match status" value="1"/>
</dbReference>
<dbReference type="NCBIfam" id="NF002032">
    <property type="entry name" value="PRK00856.1"/>
    <property type="match status" value="1"/>
</dbReference>
<dbReference type="PANTHER" id="PTHR45753:SF6">
    <property type="entry name" value="ASPARTATE CARBAMOYLTRANSFERASE"/>
    <property type="match status" value="1"/>
</dbReference>
<dbReference type="PANTHER" id="PTHR45753">
    <property type="entry name" value="ORNITHINE CARBAMOYLTRANSFERASE, MITOCHONDRIAL"/>
    <property type="match status" value="1"/>
</dbReference>
<dbReference type="Pfam" id="PF00185">
    <property type="entry name" value="OTCace"/>
    <property type="match status" value="1"/>
</dbReference>
<dbReference type="Pfam" id="PF02729">
    <property type="entry name" value="OTCace_N"/>
    <property type="match status" value="1"/>
</dbReference>
<dbReference type="PRINTS" id="PR00100">
    <property type="entry name" value="AOTCASE"/>
</dbReference>
<dbReference type="PRINTS" id="PR00101">
    <property type="entry name" value="ATCASE"/>
</dbReference>
<dbReference type="SUPFAM" id="SSF53671">
    <property type="entry name" value="Aspartate/ornithine carbamoyltransferase"/>
    <property type="match status" value="1"/>
</dbReference>
<dbReference type="PROSITE" id="PS00097">
    <property type="entry name" value="CARBAMOYLTRANSFERASE"/>
    <property type="match status" value="1"/>
</dbReference>
<reference key="1">
    <citation type="submission" date="2007-03" db="EMBL/GenBank/DDBJ databases">
        <authorList>
            <person name="Heidelberg J."/>
        </authorList>
    </citation>
    <scope>NUCLEOTIDE SEQUENCE [LARGE SCALE GENOMIC DNA]</scope>
    <source>
        <strain>ATCC 39541 / Classical Ogawa 395 / O395</strain>
    </source>
</reference>
<reference key="2">
    <citation type="journal article" date="2008" name="PLoS ONE">
        <title>A recalibrated molecular clock and independent origins for the cholera pandemic clones.</title>
        <authorList>
            <person name="Feng L."/>
            <person name="Reeves P.R."/>
            <person name="Lan R."/>
            <person name="Ren Y."/>
            <person name="Gao C."/>
            <person name="Zhou Z."/>
            <person name="Ren Y."/>
            <person name="Cheng J."/>
            <person name="Wang W."/>
            <person name="Wang J."/>
            <person name="Qian W."/>
            <person name="Li D."/>
            <person name="Wang L."/>
        </authorList>
    </citation>
    <scope>NUCLEOTIDE SEQUENCE [LARGE SCALE GENOMIC DNA]</scope>
    <source>
        <strain>ATCC 39541 / Classical Ogawa 395 / O395</strain>
    </source>
</reference>
<comment type="function">
    <text evidence="1">Catalyzes the condensation of carbamoyl phosphate and aspartate to form carbamoyl aspartate and inorganic phosphate, the committed step in the de novo pyrimidine nucleotide biosynthesis pathway.</text>
</comment>
<comment type="catalytic activity">
    <reaction evidence="1">
        <text>carbamoyl phosphate + L-aspartate = N-carbamoyl-L-aspartate + phosphate + H(+)</text>
        <dbReference type="Rhea" id="RHEA:20013"/>
        <dbReference type="ChEBI" id="CHEBI:15378"/>
        <dbReference type="ChEBI" id="CHEBI:29991"/>
        <dbReference type="ChEBI" id="CHEBI:32814"/>
        <dbReference type="ChEBI" id="CHEBI:43474"/>
        <dbReference type="ChEBI" id="CHEBI:58228"/>
        <dbReference type="EC" id="2.1.3.2"/>
    </reaction>
</comment>
<comment type="pathway">
    <text evidence="1">Pyrimidine metabolism; UMP biosynthesis via de novo pathway; (S)-dihydroorotate from bicarbonate: step 2/3.</text>
</comment>
<comment type="subunit">
    <text evidence="1">Heterododecamer (2C3:3R2) of six catalytic PyrB chains organized as two trimers (C3), and six regulatory PyrI chains organized as three dimers (R2).</text>
</comment>
<comment type="similarity">
    <text evidence="1">Belongs to the aspartate/ornithine carbamoyltransferase superfamily. ATCase family.</text>
</comment>
<comment type="sequence caution" evidence="2">
    <conflict type="erroneous initiation">
        <sequence resource="EMBL-CDS" id="ABQ21919"/>
    </conflict>
</comment>
<comment type="sequence caution" evidence="2">
    <conflict type="erroneous initiation">
        <sequence resource="EMBL-CDS" id="ACP10610"/>
    </conflict>
</comment>
<gene>
    <name evidence="1" type="primary">pyrB</name>
    <name type="ordered locus">VC0395_A2092</name>
    <name type="ordered locus">VC395_2624</name>
</gene>
<sequence length="309" mass="34350">MANSLYQKHIISIAELSRAELELIVKTAGQLKAQPNPELIKHKVVASCFFEPSTRTRLSFETAIQRIGGSVIGFDNGGNTSLAKKGETLADSVRVISSYVDAFVMRHPQEGAARLASEFSNGIPVINAGDGSNQHPSQTLLDLYSIFETQGRLDNLDVAFVGDLKYGRTVHSLAQALAKFDNNRFYFVAPEALAMPDYICEELDEAGVKYQVFSDMESVIPELDILYMTRVQKERFDESEYAHIKSAYILTAAHLSDARSNLKVLHPLPRVDEITTDVDKTPHAYYFEQVENGVYAREALLALVLNESL</sequence>
<accession>A5F5C9</accession>
<accession>C3M4Z9</accession>
<keyword id="KW-0665">Pyrimidine biosynthesis</keyword>
<keyword id="KW-0808">Transferase</keyword>
<evidence type="ECO:0000255" key="1">
    <source>
        <dbReference type="HAMAP-Rule" id="MF_00001"/>
    </source>
</evidence>
<evidence type="ECO:0000305" key="2"/>
<name>PYRB_VIBC3</name>
<feature type="chain" id="PRO_0000321181" description="Aspartate carbamoyltransferase catalytic subunit">
    <location>
        <begin position="1"/>
        <end position="309"/>
    </location>
</feature>
<feature type="binding site" evidence="1">
    <location>
        <position position="55"/>
    </location>
    <ligand>
        <name>carbamoyl phosphate</name>
        <dbReference type="ChEBI" id="CHEBI:58228"/>
    </ligand>
</feature>
<feature type="binding site" evidence="1">
    <location>
        <position position="56"/>
    </location>
    <ligand>
        <name>carbamoyl phosphate</name>
        <dbReference type="ChEBI" id="CHEBI:58228"/>
    </ligand>
</feature>
<feature type="binding site" evidence="1">
    <location>
        <position position="85"/>
    </location>
    <ligand>
        <name>L-aspartate</name>
        <dbReference type="ChEBI" id="CHEBI:29991"/>
    </ligand>
</feature>
<feature type="binding site" evidence="1">
    <location>
        <position position="106"/>
    </location>
    <ligand>
        <name>carbamoyl phosphate</name>
        <dbReference type="ChEBI" id="CHEBI:58228"/>
    </ligand>
</feature>
<feature type="binding site" evidence="1">
    <location>
        <position position="135"/>
    </location>
    <ligand>
        <name>carbamoyl phosphate</name>
        <dbReference type="ChEBI" id="CHEBI:58228"/>
    </ligand>
</feature>
<feature type="binding site" evidence="1">
    <location>
        <position position="138"/>
    </location>
    <ligand>
        <name>carbamoyl phosphate</name>
        <dbReference type="ChEBI" id="CHEBI:58228"/>
    </ligand>
</feature>
<feature type="binding site" evidence="1">
    <location>
        <position position="168"/>
    </location>
    <ligand>
        <name>L-aspartate</name>
        <dbReference type="ChEBI" id="CHEBI:29991"/>
    </ligand>
</feature>
<feature type="binding site" evidence="1">
    <location>
        <position position="230"/>
    </location>
    <ligand>
        <name>L-aspartate</name>
        <dbReference type="ChEBI" id="CHEBI:29991"/>
    </ligand>
</feature>
<feature type="binding site" evidence="1">
    <location>
        <position position="268"/>
    </location>
    <ligand>
        <name>carbamoyl phosphate</name>
        <dbReference type="ChEBI" id="CHEBI:58228"/>
    </ligand>
</feature>
<feature type="binding site" evidence="1">
    <location>
        <position position="269"/>
    </location>
    <ligand>
        <name>carbamoyl phosphate</name>
        <dbReference type="ChEBI" id="CHEBI:58228"/>
    </ligand>
</feature>